<keyword id="KW-0472">Membrane</keyword>
<keyword id="KW-0496">Mitochondrion</keyword>
<keyword id="KW-0999">Mitochondrion inner membrane</keyword>
<keyword id="KW-1185">Reference proteome</keyword>
<keyword id="KW-0812">Transmembrane</keyword>
<keyword id="KW-1133">Transmembrane helix</keyword>
<name>SURF1_TAKRU</name>
<proteinExistence type="inferred from homology"/>
<comment type="function">
    <text evidence="2">May play a role in mitochondrial respiratory chain complex IV assembly. Probably involved in the biogenesis of the COX complex.</text>
</comment>
<comment type="subcellular location">
    <subcellularLocation>
        <location evidence="1">Mitochondrion inner membrane</location>
    </subcellularLocation>
</comment>
<comment type="similarity">
    <text evidence="4">Belongs to the SURF1 family.</text>
</comment>
<accession>O57593</accession>
<dbReference type="EMBL" id="Y15171">
    <property type="protein sequence ID" value="CAA75445.1"/>
    <property type="molecule type" value="Genomic_DNA"/>
</dbReference>
<dbReference type="PIR" id="T52090">
    <property type="entry name" value="T52090"/>
</dbReference>
<dbReference type="SMR" id="O57593"/>
<dbReference type="STRING" id="31033.ENSTRUP00000054932"/>
<dbReference type="eggNOG" id="KOG1563">
    <property type="taxonomic scope" value="Eukaryota"/>
</dbReference>
<dbReference type="HOGENOM" id="CLU_047737_4_2_1"/>
<dbReference type="InParanoid" id="O57593"/>
<dbReference type="OrthoDB" id="10040024at2759"/>
<dbReference type="TreeFam" id="TF314684"/>
<dbReference type="Proteomes" id="UP000005226">
    <property type="component" value="Unplaced"/>
</dbReference>
<dbReference type="GO" id="GO:0005743">
    <property type="term" value="C:mitochondrial inner membrane"/>
    <property type="evidence" value="ECO:0007669"/>
    <property type="project" value="UniProtKB-SubCell"/>
</dbReference>
<dbReference type="GO" id="GO:0033617">
    <property type="term" value="P:mitochondrial cytochrome c oxidase assembly"/>
    <property type="evidence" value="ECO:0000250"/>
    <property type="project" value="UniProtKB"/>
</dbReference>
<dbReference type="CDD" id="cd06662">
    <property type="entry name" value="SURF1"/>
    <property type="match status" value="1"/>
</dbReference>
<dbReference type="InterPro" id="IPR002994">
    <property type="entry name" value="Surf1/Shy1"/>
</dbReference>
<dbReference type="InterPro" id="IPR045214">
    <property type="entry name" value="Surf1/Surf4"/>
</dbReference>
<dbReference type="PANTHER" id="PTHR23427">
    <property type="entry name" value="SURFEIT LOCUS PROTEIN"/>
    <property type="match status" value="1"/>
</dbReference>
<dbReference type="PANTHER" id="PTHR23427:SF2">
    <property type="entry name" value="SURFEIT LOCUS PROTEIN 1"/>
    <property type="match status" value="1"/>
</dbReference>
<dbReference type="Pfam" id="PF02104">
    <property type="entry name" value="SURF1"/>
    <property type="match status" value="1"/>
</dbReference>
<dbReference type="PROSITE" id="PS50895">
    <property type="entry name" value="SURF1"/>
    <property type="match status" value="1"/>
</dbReference>
<gene>
    <name type="primary">surf1</name>
    <name type="synonym">surf-1</name>
</gene>
<feature type="chain" id="PRO_0000215656" description="Surfeit locus protein 1">
    <location>
        <begin position="1" status="less than"/>
        <end position="240"/>
    </location>
</feature>
<feature type="transmembrane region" description="Helical" evidence="3">
    <location>
        <begin position="2"/>
        <end position="20"/>
    </location>
</feature>
<feature type="transmembrane region" description="Helical" evidence="3">
    <location>
        <begin position="215"/>
        <end position="235"/>
    </location>
</feature>
<feature type="non-terminal residue">
    <location>
        <position position="1"/>
    </location>
</feature>
<sequence>SFLKWFLLLIPATTFGLGTWQVKRRQWKMELIDGLTKLTTAEPIPLPIDPAELSSLEYRRVKMRGKYDHSKELYILPRSPVDPEKEAREAGRLSSSGETGANVITPFHVTDLGITILVNRGYVPKKKIRPETRMKGQVEGEMEVVGVVRLTETRKPFVPNNDVERNHWHYRDLEAMCQVTGAEPIFVDADFSSTVPGGPIGGQTRVTLRNEHMQYIVTWYGLCAATSYMWFAKFIKKIKV</sequence>
<reference key="1">
    <citation type="journal article" date="1997" name="Genome Res.">
        <title>The comparative genomic structure and sequence of the surfeit gene homologs in the puffer fish Fugu rubripes and their association with CpG-rich islands.</title>
        <authorList>
            <person name="Armes N."/>
            <person name="Gilley J."/>
            <person name="Fried M."/>
        </authorList>
    </citation>
    <scope>NUCLEOTIDE SEQUENCE [GENOMIC DNA]</scope>
</reference>
<organism>
    <name type="scientific">Takifugu rubripes</name>
    <name type="common">Japanese pufferfish</name>
    <name type="synonym">Fugu rubripes</name>
    <dbReference type="NCBI Taxonomy" id="31033"/>
    <lineage>
        <taxon>Eukaryota</taxon>
        <taxon>Metazoa</taxon>
        <taxon>Chordata</taxon>
        <taxon>Craniata</taxon>
        <taxon>Vertebrata</taxon>
        <taxon>Euteleostomi</taxon>
        <taxon>Actinopterygii</taxon>
        <taxon>Neopterygii</taxon>
        <taxon>Teleostei</taxon>
        <taxon>Neoteleostei</taxon>
        <taxon>Acanthomorphata</taxon>
        <taxon>Eupercaria</taxon>
        <taxon>Tetraodontiformes</taxon>
        <taxon>Tetradontoidea</taxon>
        <taxon>Tetraodontidae</taxon>
        <taxon>Takifugu</taxon>
    </lineage>
</organism>
<protein>
    <recommendedName>
        <fullName>Surfeit locus protein 1</fullName>
    </recommendedName>
</protein>
<evidence type="ECO:0000250" key="1"/>
<evidence type="ECO:0000250" key="2">
    <source>
        <dbReference type="UniProtKB" id="Q15526"/>
    </source>
</evidence>
<evidence type="ECO:0000255" key="3"/>
<evidence type="ECO:0000305" key="4"/>